<accession>B2TY68</accession>
<proteinExistence type="inferred from homology"/>
<protein>
    <recommendedName>
        <fullName evidence="1">3-keto-L-gulonate-6-phosphate decarboxylase UlaD</fullName>
        <ecNumber evidence="1">4.1.1.85</ecNumber>
    </recommendedName>
    <alternativeName>
        <fullName evidence="1">3-dehydro-L-gulonate-6-phosphate decarboxylase</fullName>
    </alternativeName>
    <alternativeName>
        <fullName evidence="1">KGPDC</fullName>
    </alternativeName>
    <alternativeName>
        <fullName evidence="1">L-ascorbate utilization protein D</fullName>
    </alternativeName>
</protein>
<keyword id="KW-0119">Carbohydrate metabolism</keyword>
<keyword id="KW-0210">Decarboxylase</keyword>
<keyword id="KW-0456">Lyase</keyword>
<keyword id="KW-0460">Magnesium</keyword>
<keyword id="KW-0479">Metal-binding</keyword>
<keyword id="KW-1185">Reference proteome</keyword>
<sequence length="216" mass="23677">MSLPMLQVALDNQTMDSAYETTRLIAEEVDIIEVGTILCVGEGVRAVRDLKALYPHKIVLADAKIADAGKILSRMCFEANADWVTVICCADINTAKGALDVAKEFNGDVQIELTGYWTWEQAQQWRDAGIQQVVYHRSRDAQAAGVAWGEADITAIKRLSDMGFKVTVTGGLVLEDLPLFKGIPIHVFIAGRSIRDAASPVEAARQFKRSIAELWG</sequence>
<feature type="chain" id="PRO_1000140126" description="3-keto-L-gulonate-6-phosphate decarboxylase UlaD">
    <location>
        <begin position="1"/>
        <end position="216"/>
    </location>
</feature>
<feature type="binding site" evidence="1">
    <location>
        <position position="11"/>
    </location>
    <ligand>
        <name>substrate</name>
    </ligand>
</feature>
<feature type="binding site" evidence="1">
    <location>
        <position position="33"/>
    </location>
    <ligand>
        <name>Mg(2+)</name>
        <dbReference type="ChEBI" id="CHEBI:18420"/>
    </ligand>
</feature>
<feature type="binding site" evidence="1">
    <location>
        <position position="62"/>
    </location>
    <ligand>
        <name>Mg(2+)</name>
        <dbReference type="ChEBI" id="CHEBI:18420"/>
    </ligand>
</feature>
<feature type="binding site" evidence="1">
    <location>
        <position position="192"/>
    </location>
    <ligand>
        <name>substrate</name>
    </ligand>
</feature>
<feature type="site" description="Transition state stabilizer" evidence="1">
    <location>
        <position position="64"/>
    </location>
</feature>
<feature type="site" description="Transition state stabilizer" evidence="1">
    <location>
        <position position="67"/>
    </location>
</feature>
<evidence type="ECO:0000255" key="1">
    <source>
        <dbReference type="HAMAP-Rule" id="MF_01267"/>
    </source>
</evidence>
<gene>
    <name evidence="1" type="primary">ulaD</name>
    <name type="ordered locus">SbBS512_E4726</name>
</gene>
<reference key="1">
    <citation type="submission" date="2008-05" db="EMBL/GenBank/DDBJ databases">
        <title>Complete sequence of Shigella boydii serotype 18 strain BS512.</title>
        <authorList>
            <person name="Rasko D.A."/>
            <person name="Rosovitz M."/>
            <person name="Maurelli A.T."/>
            <person name="Myers G."/>
            <person name="Seshadri R."/>
            <person name="Cer R."/>
            <person name="Jiang L."/>
            <person name="Ravel J."/>
            <person name="Sebastian Y."/>
        </authorList>
    </citation>
    <scope>NUCLEOTIDE SEQUENCE [LARGE SCALE GENOMIC DNA]</scope>
    <source>
        <strain>CDC 3083-94 / BS512</strain>
    </source>
</reference>
<name>ULAD_SHIB3</name>
<comment type="function">
    <text evidence="1">Catalyzes the decarboxylation of 3-keto-L-gulonate-6-P into L-xylulose-5-P. Is involved in the anaerobic L-ascorbate utilization.</text>
</comment>
<comment type="catalytic activity">
    <reaction evidence="1">
        <text>3-dehydro-L-gulonate 6-phosphate + H(+) = L-xylulose 5-phosphate + CO2</text>
        <dbReference type="Rhea" id="RHEA:14353"/>
        <dbReference type="ChEBI" id="CHEBI:15378"/>
        <dbReference type="ChEBI" id="CHEBI:16526"/>
        <dbReference type="ChEBI" id="CHEBI:57829"/>
        <dbReference type="ChEBI" id="CHEBI:58774"/>
        <dbReference type="EC" id="4.1.1.85"/>
    </reaction>
</comment>
<comment type="cofactor">
    <cofactor evidence="1">
        <name>Mg(2+)</name>
        <dbReference type="ChEBI" id="CHEBI:18420"/>
    </cofactor>
    <text evidence="1">Binds 1 Mg(2+) ion per subunit.</text>
</comment>
<comment type="pathway">
    <text evidence="1">Cofactor degradation; L-ascorbate degradation; D-xylulose 5-phosphate from L-ascorbate: step 2/4.</text>
</comment>
<comment type="subunit">
    <text evidence="1">Homodimer.</text>
</comment>
<comment type="induction">
    <text evidence="1">Induced by L-ascorbate. Repressed by UlaR.</text>
</comment>
<comment type="similarity">
    <text evidence="1">Belongs to the HPS/KGPDC family. KGPDC subfamily.</text>
</comment>
<dbReference type="EC" id="4.1.1.85" evidence="1"/>
<dbReference type="EMBL" id="CP001063">
    <property type="protein sequence ID" value="ACD07252.1"/>
    <property type="molecule type" value="Genomic_DNA"/>
</dbReference>
<dbReference type="RefSeq" id="WP_000056766.1">
    <property type="nucleotide sequence ID" value="NC_010658.1"/>
</dbReference>
<dbReference type="SMR" id="B2TY68"/>
<dbReference type="STRING" id="344609.SbBS512_E4726"/>
<dbReference type="KEGG" id="sbc:SbBS512_E4726"/>
<dbReference type="HOGENOM" id="CLU_081825_0_0_6"/>
<dbReference type="UniPathway" id="UPA00263">
    <property type="reaction ID" value="UER00378"/>
</dbReference>
<dbReference type="Proteomes" id="UP000001030">
    <property type="component" value="Chromosome"/>
</dbReference>
<dbReference type="GO" id="GO:0033982">
    <property type="term" value="F:3-dehydro-L-gulonate-6-phosphate decarboxylase activity"/>
    <property type="evidence" value="ECO:0007669"/>
    <property type="project" value="UniProtKB-EC"/>
</dbReference>
<dbReference type="GO" id="GO:0000287">
    <property type="term" value="F:magnesium ion binding"/>
    <property type="evidence" value="ECO:0007669"/>
    <property type="project" value="UniProtKB-UniRule"/>
</dbReference>
<dbReference type="GO" id="GO:0004590">
    <property type="term" value="F:orotidine-5'-phosphate decarboxylase activity"/>
    <property type="evidence" value="ECO:0007669"/>
    <property type="project" value="InterPro"/>
</dbReference>
<dbReference type="GO" id="GO:0006207">
    <property type="term" value="P:'de novo' pyrimidine nucleobase biosynthetic process"/>
    <property type="evidence" value="ECO:0007669"/>
    <property type="project" value="InterPro"/>
</dbReference>
<dbReference type="GO" id="GO:0019854">
    <property type="term" value="P:L-ascorbic acid catabolic process"/>
    <property type="evidence" value="ECO:0007669"/>
    <property type="project" value="UniProtKB-UniRule"/>
</dbReference>
<dbReference type="CDD" id="cd04726">
    <property type="entry name" value="KGPDC_HPS"/>
    <property type="match status" value="1"/>
</dbReference>
<dbReference type="FunFam" id="3.20.20.70:FF:000022">
    <property type="entry name" value="3-keto-L-gulonate-6-phosphate decarboxylase UlaD"/>
    <property type="match status" value="1"/>
</dbReference>
<dbReference type="Gene3D" id="3.20.20.70">
    <property type="entry name" value="Aldolase class I"/>
    <property type="match status" value="1"/>
</dbReference>
<dbReference type="HAMAP" id="MF_01267">
    <property type="entry name" value="UlaD"/>
    <property type="match status" value="1"/>
</dbReference>
<dbReference type="InterPro" id="IPR023942">
    <property type="entry name" value="3-keto-L-gulonate6Pdecase_UlaD"/>
</dbReference>
<dbReference type="InterPro" id="IPR013785">
    <property type="entry name" value="Aldolase_TIM"/>
</dbReference>
<dbReference type="InterPro" id="IPR041710">
    <property type="entry name" value="HPS/KGPDC"/>
</dbReference>
<dbReference type="InterPro" id="IPR001754">
    <property type="entry name" value="OMPdeCOase_dom"/>
</dbReference>
<dbReference type="InterPro" id="IPR011060">
    <property type="entry name" value="RibuloseP-bd_barrel"/>
</dbReference>
<dbReference type="NCBIfam" id="NF009832">
    <property type="entry name" value="PRK13306.1"/>
    <property type="match status" value="1"/>
</dbReference>
<dbReference type="PANTHER" id="PTHR35039">
    <property type="entry name" value="3-KETO-L-GULONATE-6-PHOSPHATE DECARBOXYLASE SGBH-RELATED"/>
    <property type="match status" value="1"/>
</dbReference>
<dbReference type="PANTHER" id="PTHR35039:SF3">
    <property type="entry name" value="3-KETO-L-GULONATE-6-PHOSPHATE DECARBOXYLASE SGBH-RELATED"/>
    <property type="match status" value="1"/>
</dbReference>
<dbReference type="Pfam" id="PF00215">
    <property type="entry name" value="OMPdecase"/>
    <property type="match status" value="1"/>
</dbReference>
<dbReference type="SMART" id="SM00934">
    <property type="entry name" value="OMPdecase"/>
    <property type="match status" value="1"/>
</dbReference>
<dbReference type="SUPFAM" id="SSF51366">
    <property type="entry name" value="Ribulose-phoshate binding barrel"/>
    <property type="match status" value="1"/>
</dbReference>
<organism>
    <name type="scientific">Shigella boydii serotype 18 (strain CDC 3083-94 / BS512)</name>
    <dbReference type="NCBI Taxonomy" id="344609"/>
    <lineage>
        <taxon>Bacteria</taxon>
        <taxon>Pseudomonadati</taxon>
        <taxon>Pseudomonadota</taxon>
        <taxon>Gammaproteobacteria</taxon>
        <taxon>Enterobacterales</taxon>
        <taxon>Enterobacteriaceae</taxon>
        <taxon>Shigella</taxon>
    </lineage>
</organism>